<dbReference type="EC" id="3.2.2.23" evidence="2"/>
<dbReference type="EC" id="4.2.99.18" evidence="2"/>
<dbReference type="EMBL" id="AP008230">
    <property type="protein sequence ID" value="BAE83130.1"/>
    <property type="molecule type" value="Genomic_DNA"/>
</dbReference>
<dbReference type="RefSeq" id="WP_005816814.1">
    <property type="nucleotide sequence ID" value="NC_007907.1"/>
</dbReference>
<dbReference type="SMR" id="Q24XW2"/>
<dbReference type="STRING" id="138119.DSY1341"/>
<dbReference type="KEGG" id="dsy:DSY1341"/>
<dbReference type="eggNOG" id="COG0266">
    <property type="taxonomic scope" value="Bacteria"/>
</dbReference>
<dbReference type="HOGENOM" id="CLU_038423_1_2_9"/>
<dbReference type="Proteomes" id="UP000001946">
    <property type="component" value="Chromosome"/>
</dbReference>
<dbReference type="GO" id="GO:0034039">
    <property type="term" value="F:8-oxo-7,8-dihydroguanine DNA N-glycosylase activity"/>
    <property type="evidence" value="ECO:0007669"/>
    <property type="project" value="TreeGrafter"/>
</dbReference>
<dbReference type="GO" id="GO:0140078">
    <property type="term" value="F:class I DNA-(apurinic or apyrimidinic site) endonuclease activity"/>
    <property type="evidence" value="ECO:0007669"/>
    <property type="project" value="UniProtKB-EC"/>
</dbReference>
<dbReference type="GO" id="GO:0003684">
    <property type="term" value="F:damaged DNA binding"/>
    <property type="evidence" value="ECO:0007669"/>
    <property type="project" value="InterPro"/>
</dbReference>
<dbReference type="GO" id="GO:0008270">
    <property type="term" value="F:zinc ion binding"/>
    <property type="evidence" value="ECO:0007669"/>
    <property type="project" value="UniProtKB-UniRule"/>
</dbReference>
<dbReference type="GO" id="GO:0006284">
    <property type="term" value="P:base-excision repair"/>
    <property type="evidence" value="ECO:0007669"/>
    <property type="project" value="InterPro"/>
</dbReference>
<dbReference type="CDD" id="cd08966">
    <property type="entry name" value="EcFpg-like_N"/>
    <property type="match status" value="1"/>
</dbReference>
<dbReference type="FunFam" id="1.10.8.50:FF:000003">
    <property type="entry name" value="Formamidopyrimidine-DNA glycosylase"/>
    <property type="match status" value="1"/>
</dbReference>
<dbReference type="Gene3D" id="1.10.8.50">
    <property type="match status" value="1"/>
</dbReference>
<dbReference type="Gene3D" id="3.20.190.10">
    <property type="entry name" value="MutM-like, N-terminal"/>
    <property type="match status" value="1"/>
</dbReference>
<dbReference type="HAMAP" id="MF_00103">
    <property type="entry name" value="Fapy_DNA_glycosyl"/>
    <property type="match status" value="1"/>
</dbReference>
<dbReference type="InterPro" id="IPR015886">
    <property type="entry name" value="DNA_glyclase/AP_lyase_DNA-bd"/>
</dbReference>
<dbReference type="InterPro" id="IPR015887">
    <property type="entry name" value="DNA_glyclase_Znf_dom_DNA_BS"/>
</dbReference>
<dbReference type="InterPro" id="IPR020629">
    <property type="entry name" value="Formamido-pyr_DNA_Glyclase"/>
</dbReference>
<dbReference type="InterPro" id="IPR012319">
    <property type="entry name" value="FPG_cat"/>
</dbReference>
<dbReference type="InterPro" id="IPR035937">
    <property type="entry name" value="MutM-like_N-ter"/>
</dbReference>
<dbReference type="InterPro" id="IPR010979">
    <property type="entry name" value="Ribosomal_uS13-like_H2TH"/>
</dbReference>
<dbReference type="InterPro" id="IPR000214">
    <property type="entry name" value="Znf_DNA_glyclase/AP_lyase"/>
</dbReference>
<dbReference type="InterPro" id="IPR010663">
    <property type="entry name" value="Znf_FPG/IleRS"/>
</dbReference>
<dbReference type="NCBIfam" id="TIGR00577">
    <property type="entry name" value="fpg"/>
    <property type="match status" value="1"/>
</dbReference>
<dbReference type="NCBIfam" id="NF002211">
    <property type="entry name" value="PRK01103.1"/>
    <property type="match status" value="1"/>
</dbReference>
<dbReference type="PANTHER" id="PTHR22993">
    <property type="entry name" value="FORMAMIDOPYRIMIDINE-DNA GLYCOSYLASE"/>
    <property type="match status" value="1"/>
</dbReference>
<dbReference type="PANTHER" id="PTHR22993:SF9">
    <property type="entry name" value="FORMAMIDOPYRIMIDINE-DNA GLYCOSYLASE"/>
    <property type="match status" value="1"/>
</dbReference>
<dbReference type="Pfam" id="PF01149">
    <property type="entry name" value="Fapy_DNA_glyco"/>
    <property type="match status" value="1"/>
</dbReference>
<dbReference type="Pfam" id="PF06831">
    <property type="entry name" value="H2TH"/>
    <property type="match status" value="1"/>
</dbReference>
<dbReference type="Pfam" id="PF06827">
    <property type="entry name" value="zf-FPG_IleRS"/>
    <property type="match status" value="1"/>
</dbReference>
<dbReference type="SMART" id="SM00898">
    <property type="entry name" value="Fapy_DNA_glyco"/>
    <property type="match status" value="1"/>
</dbReference>
<dbReference type="SMART" id="SM01232">
    <property type="entry name" value="H2TH"/>
    <property type="match status" value="1"/>
</dbReference>
<dbReference type="SUPFAM" id="SSF57716">
    <property type="entry name" value="Glucocorticoid receptor-like (DNA-binding domain)"/>
    <property type="match status" value="1"/>
</dbReference>
<dbReference type="SUPFAM" id="SSF81624">
    <property type="entry name" value="N-terminal domain of MutM-like DNA repair proteins"/>
    <property type="match status" value="1"/>
</dbReference>
<dbReference type="SUPFAM" id="SSF46946">
    <property type="entry name" value="S13-like H2TH domain"/>
    <property type="match status" value="1"/>
</dbReference>
<dbReference type="PROSITE" id="PS51068">
    <property type="entry name" value="FPG_CAT"/>
    <property type="match status" value="1"/>
</dbReference>
<dbReference type="PROSITE" id="PS01242">
    <property type="entry name" value="ZF_FPG_1"/>
    <property type="match status" value="1"/>
</dbReference>
<dbReference type="PROSITE" id="PS51066">
    <property type="entry name" value="ZF_FPG_2"/>
    <property type="match status" value="1"/>
</dbReference>
<feature type="initiator methionine" description="Removed" evidence="1">
    <location>
        <position position="1"/>
    </location>
</feature>
<feature type="chain" id="PRO_1000008692" description="Formamidopyrimidine-DNA glycosylase">
    <location>
        <begin position="2"/>
        <end position="273"/>
    </location>
</feature>
<feature type="zinc finger region" description="FPG-type" evidence="2">
    <location>
        <begin position="239"/>
        <end position="273"/>
    </location>
</feature>
<feature type="active site" description="Schiff-base intermediate with DNA" evidence="2">
    <location>
        <position position="2"/>
    </location>
</feature>
<feature type="active site" description="Proton donor" evidence="2">
    <location>
        <position position="3"/>
    </location>
</feature>
<feature type="active site" description="Proton donor; for beta-elimination activity" evidence="2">
    <location>
        <position position="59"/>
    </location>
</feature>
<feature type="active site" description="Proton donor; for delta-elimination activity" evidence="2">
    <location>
        <position position="263"/>
    </location>
</feature>
<feature type="binding site" evidence="2">
    <location>
        <position position="93"/>
    </location>
    <ligand>
        <name>DNA</name>
        <dbReference type="ChEBI" id="CHEBI:16991"/>
    </ligand>
</feature>
<feature type="binding site" evidence="2">
    <location>
        <position position="111"/>
    </location>
    <ligand>
        <name>DNA</name>
        <dbReference type="ChEBI" id="CHEBI:16991"/>
    </ligand>
</feature>
<feature type="binding site" evidence="2">
    <location>
        <position position="154"/>
    </location>
    <ligand>
        <name>DNA</name>
        <dbReference type="ChEBI" id="CHEBI:16991"/>
    </ligand>
</feature>
<protein>
    <recommendedName>
        <fullName evidence="2">Formamidopyrimidine-DNA glycosylase</fullName>
        <shortName evidence="2">Fapy-DNA glycosylase</shortName>
        <ecNumber evidence="2">3.2.2.23</ecNumber>
    </recommendedName>
    <alternativeName>
        <fullName evidence="2">DNA-(apurinic or apyrimidinic site) lyase MutM</fullName>
        <shortName evidence="2">AP lyase MutM</shortName>
        <ecNumber evidence="2">4.2.99.18</ecNumber>
    </alternativeName>
</protein>
<accession>Q24XW2</accession>
<reference key="1">
    <citation type="journal article" date="2006" name="J. Bacteriol.">
        <title>Complete genome sequence of the dehalorespiring bacterium Desulfitobacterium hafniense Y51 and comparison with Dehalococcoides ethenogenes 195.</title>
        <authorList>
            <person name="Nonaka H."/>
            <person name="Keresztes G."/>
            <person name="Shinoda Y."/>
            <person name="Ikenaga Y."/>
            <person name="Abe M."/>
            <person name="Naito K."/>
            <person name="Inatomi K."/>
            <person name="Furukawa K."/>
            <person name="Inui M."/>
            <person name="Yukawa H."/>
        </authorList>
    </citation>
    <scope>NUCLEOTIDE SEQUENCE [LARGE SCALE GENOMIC DNA]</scope>
    <source>
        <strain>Y51</strain>
    </source>
</reference>
<comment type="function">
    <text evidence="2">Involved in base excision repair of DNA damaged by oxidation or by mutagenic agents. Acts as a DNA glycosylase that recognizes and removes damaged bases. Has a preference for oxidized purines, such as 7,8-dihydro-8-oxoguanine (8-oxoG). Has AP (apurinic/apyrimidinic) lyase activity and introduces nicks in the DNA strand. Cleaves the DNA backbone by beta-delta elimination to generate a single-strand break at the site of the removed base with both 3'- and 5'-phosphates.</text>
</comment>
<comment type="catalytic activity">
    <reaction evidence="2">
        <text>Hydrolysis of DNA containing ring-opened 7-methylguanine residues, releasing 2,6-diamino-4-hydroxy-5-(N-methyl)formamidopyrimidine.</text>
        <dbReference type="EC" id="3.2.2.23"/>
    </reaction>
</comment>
<comment type="catalytic activity">
    <reaction evidence="2">
        <text>2'-deoxyribonucleotide-(2'-deoxyribose 5'-phosphate)-2'-deoxyribonucleotide-DNA = a 3'-end 2'-deoxyribonucleotide-(2,3-dehydro-2,3-deoxyribose 5'-phosphate)-DNA + a 5'-end 5'-phospho-2'-deoxyribonucleoside-DNA + H(+)</text>
        <dbReference type="Rhea" id="RHEA:66592"/>
        <dbReference type="Rhea" id="RHEA-COMP:13180"/>
        <dbReference type="Rhea" id="RHEA-COMP:16897"/>
        <dbReference type="Rhea" id="RHEA-COMP:17067"/>
        <dbReference type="ChEBI" id="CHEBI:15378"/>
        <dbReference type="ChEBI" id="CHEBI:136412"/>
        <dbReference type="ChEBI" id="CHEBI:157695"/>
        <dbReference type="ChEBI" id="CHEBI:167181"/>
        <dbReference type="EC" id="4.2.99.18"/>
    </reaction>
</comment>
<comment type="cofactor">
    <cofactor evidence="2">
        <name>Zn(2+)</name>
        <dbReference type="ChEBI" id="CHEBI:29105"/>
    </cofactor>
    <text evidence="2">Binds 1 zinc ion per subunit.</text>
</comment>
<comment type="subunit">
    <text evidence="2">Monomer.</text>
</comment>
<comment type="similarity">
    <text evidence="2">Belongs to the FPG family.</text>
</comment>
<proteinExistence type="inferred from homology"/>
<evidence type="ECO:0000250" key="1"/>
<evidence type="ECO:0000255" key="2">
    <source>
        <dbReference type="HAMAP-Rule" id="MF_00103"/>
    </source>
</evidence>
<organism>
    <name type="scientific">Desulfitobacterium hafniense (strain Y51)</name>
    <dbReference type="NCBI Taxonomy" id="138119"/>
    <lineage>
        <taxon>Bacteria</taxon>
        <taxon>Bacillati</taxon>
        <taxon>Bacillota</taxon>
        <taxon>Clostridia</taxon>
        <taxon>Eubacteriales</taxon>
        <taxon>Desulfitobacteriaceae</taxon>
        <taxon>Desulfitobacterium</taxon>
    </lineage>
</organism>
<name>FPG_DESHY</name>
<keyword id="KW-0227">DNA damage</keyword>
<keyword id="KW-0234">DNA repair</keyword>
<keyword id="KW-0238">DNA-binding</keyword>
<keyword id="KW-0326">Glycosidase</keyword>
<keyword id="KW-0378">Hydrolase</keyword>
<keyword id="KW-0456">Lyase</keyword>
<keyword id="KW-0479">Metal-binding</keyword>
<keyword id="KW-0511">Multifunctional enzyme</keyword>
<keyword id="KW-1185">Reference proteome</keyword>
<keyword id="KW-0862">Zinc</keyword>
<keyword id="KW-0863">Zinc-finger</keyword>
<sequence>MPELPEVETIRRSLSQHILERRIEEILIRWPGAVEGYEEKTFADAVRGLKFQSIERRGKYLLFTLEEGWSFIAHMRMTGRMVYHAQSQEPEKHTHVVLKLSSGEIHFTDTRKFGRLQLVRTEERLQQPSLARLGPEPLEEGFSAAELGRRLAPRKLAIKAALLDQTLVAGIGNIYADEALFRAGIAPERCANSLTKEEIEKLYPAICQVLEEGIAANGTSFRDYQDANGERGDFQKELKVYGRGGEPCKECGHTLVRIRLAGRSTVFCPCCQV</sequence>
<gene>
    <name evidence="2" type="primary">mutM</name>
    <name evidence="2" type="synonym">fpg</name>
    <name type="ordered locus">DSY1341</name>
</gene>